<sequence length="237" mass="26153">MSIHISAKPGEIADKILLPGDPLRAKFIAENFLEDAVCFNEVRNMFGYTGTYKGHRVSVMGTGMGIPSISIYAHELINEYGVKKLIRVGTAGSLNEDVHVRELVLAQAAATNSRMINIDWPEYDLPQIADFDLLDKAYHIAKELNMTTHVGNVLSSDSFYSPKLFSRNLELGQLGVKAVEMEAAALYYLGAKFGVQTLAIMTISDSLVNPEEDTTAEERQNTFTDMMKVGLETLIAE</sequence>
<evidence type="ECO:0000250" key="1">
    <source>
        <dbReference type="UniProtKB" id="P50389"/>
    </source>
</evidence>
<evidence type="ECO:0000255" key="2">
    <source>
        <dbReference type="HAMAP-Rule" id="MF_01627"/>
    </source>
</evidence>
<comment type="function">
    <text evidence="2">Catalyzes the reversible phosphorolytic breakdown of the N-glycosidic bond in the beta-(deoxy)ribonucleoside molecules, with the formation of the corresponding free purine bases and pentose-1-phosphate.</text>
</comment>
<comment type="catalytic activity">
    <reaction evidence="2">
        <text>a purine D-ribonucleoside + phosphate = a purine nucleobase + alpha-D-ribose 1-phosphate</text>
        <dbReference type="Rhea" id="RHEA:19805"/>
        <dbReference type="ChEBI" id="CHEBI:26386"/>
        <dbReference type="ChEBI" id="CHEBI:43474"/>
        <dbReference type="ChEBI" id="CHEBI:57720"/>
        <dbReference type="ChEBI" id="CHEBI:142355"/>
        <dbReference type="EC" id="2.4.2.1"/>
    </reaction>
</comment>
<comment type="catalytic activity">
    <reaction evidence="2">
        <text>a purine 2'-deoxy-D-ribonucleoside + phosphate = a purine nucleobase + 2-deoxy-alpha-D-ribose 1-phosphate</text>
        <dbReference type="Rhea" id="RHEA:36431"/>
        <dbReference type="ChEBI" id="CHEBI:26386"/>
        <dbReference type="ChEBI" id="CHEBI:43474"/>
        <dbReference type="ChEBI" id="CHEBI:57259"/>
        <dbReference type="ChEBI" id="CHEBI:142361"/>
        <dbReference type="EC" id="2.4.2.1"/>
    </reaction>
</comment>
<comment type="subunit">
    <text evidence="2">Homohexamer; trimer of homodimers.</text>
</comment>
<comment type="similarity">
    <text evidence="2">Belongs to the PNP/UDP phosphorylase family.</text>
</comment>
<organism>
    <name type="scientific">Streptococcus suis (strain 05ZYH33)</name>
    <dbReference type="NCBI Taxonomy" id="391295"/>
    <lineage>
        <taxon>Bacteria</taxon>
        <taxon>Bacillati</taxon>
        <taxon>Bacillota</taxon>
        <taxon>Bacilli</taxon>
        <taxon>Lactobacillales</taxon>
        <taxon>Streptococcaceae</taxon>
        <taxon>Streptococcus</taxon>
    </lineage>
</organism>
<reference key="1">
    <citation type="journal article" date="2007" name="PLoS ONE">
        <title>A glimpse of streptococcal toxic shock syndrome from comparative genomics of S. suis 2 Chinese isolates.</title>
        <authorList>
            <person name="Chen C."/>
            <person name="Tang J."/>
            <person name="Dong W."/>
            <person name="Wang C."/>
            <person name="Feng Y."/>
            <person name="Wang J."/>
            <person name="Zheng F."/>
            <person name="Pan X."/>
            <person name="Liu D."/>
            <person name="Li M."/>
            <person name="Song Y."/>
            <person name="Zhu X."/>
            <person name="Sun H."/>
            <person name="Feng T."/>
            <person name="Guo Z."/>
            <person name="Ju A."/>
            <person name="Ge J."/>
            <person name="Dong Y."/>
            <person name="Sun W."/>
            <person name="Jiang Y."/>
            <person name="Wang J."/>
            <person name="Yan J."/>
            <person name="Yang H."/>
            <person name="Wang X."/>
            <person name="Gao G.F."/>
            <person name="Yang R."/>
            <person name="Wang J."/>
            <person name="Yu J."/>
        </authorList>
    </citation>
    <scope>NUCLEOTIDE SEQUENCE [LARGE SCALE GENOMIC DNA]</scope>
    <source>
        <strain>05ZYH33</strain>
    </source>
</reference>
<protein>
    <recommendedName>
        <fullName evidence="2">Purine nucleoside phosphorylase DeoD-type</fullName>
        <shortName evidence="2">PNP</shortName>
        <ecNumber evidence="2">2.4.2.1</ecNumber>
    </recommendedName>
</protein>
<proteinExistence type="inferred from homology"/>
<feature type="chain" id="PRO_1000186235" description="Purine nucleoside phosphorylase DeoD-type">
    <location>
        <begin position="1"/>
        <end position="237"/>
    </location>
</feature>
<feature type="active site" description="Proton donor" evidence="2">
    <location>
        <position position="205"/>
    </location>
</feature>
<feature type="binding site" evidence="1">
    <location>
        <position position="4"/>
    </location>
    <ligand>
        <name>a purine D-ribonucleoside</name>
        <dbReference type="ChEBI" id="CHEBI:142355"/>
        <note>ligand shared between dimeric partners</note>
    </ligand>
</feature>
<feature type="binding site" description="in other chain" evidence="1">
    <location>
        <position position="20"/>
    </location>
    <ligand>
        <name>phosphate</name>
        <dbReference type="ChEBI" id="CHEBI:43474"/>
        <note>ligand shared between dimeric partners</note>
    </ligand>
</feature>
<feature type="binding site" description="in other chain" evidence="1">
    <location>
        <position position="24"/>
    </location>
    <ligand>
        <name>phosphate</name>
        <dbReference type="ChEBI" id="CHEBI:43474"/>
        <note>ligand shared between dimeric partners</note>
    </ligand>
</feature>
<feature type="binding site" evidence="1">
    <location>
        <position position="43"/>
    </location>
    <ligand>
        <name>phosphate</name>
        <dbReference type="ChEBI" id="CHEBI:43474"/>
        <note>ligand shared between dimeric partners</note>
    </ligand>
</feature>
<feature type="binding site" description="in other chain" evidence="1">
    <location>
        <begin position="87"/>
        <end position="90"/>
    </location>
    <ligand>
        <name>phosphate</name>
        <dbReference type="ChEBI" id="CHEBI:43474"/>
        <note>ligand shared between dimeric partners</note>
    </ligand>
</feature>
<feature type="binding site" description="in other chain" evidence="1">
    <location>
        <begin position="180"/>
        <end position="182"/>
    </location>
    <ligand>
        <name>a purine D-ribonucleoside</name>
        <dbReference type="ChEBI" id="CHEBI:142355"/>
        <note>ligand shared between dimeric partners</note>
    </ligand>
</feature>
<feature type="binding site" description="in other chain" evidence="1">
    <location>
        <begin position="204"/>
        <end position="205"/>
    </location>
    <ligand>
        <name>a purine D-ribonucleoside</name>
        <dbReference type="ChEBI" id="CHEBI:142355"/>
        <note>ligand shared between dimeric partners</note>
    </ligand>
</feature>
<feature type="site" description="Important for catalytic activity" evidence="2">
    <location>
        <position position="219"/>
    </location>
</feature>
<keyword id="KW-0328">Glycosyltransferase</keyword>
<keyword id="KW-0808">Transferase</keyword>
<accession>A4VWC2</accession>
<gene>
    <name evidence="2" type="primary">deoD</name>
    <name type="ordered locus">SSU05_1445</name>
</gene>
<dbReference type="EC" id="2.4.2.1" evidence="2"/>
<dbReference type="EMBL" id="CP000407">
    <property type="protein sequence ID" value="ABP90411.1"/>
    <property type="molecule type" value="Genomic_DNA"/>
</dbReference>
<dbReference type="SMR" id="A4VWC2"/>
<dbReference type="STRING" id="391295.SSU05_1445"/>
<dbReference type="KEGG" id="ssu:SSU05_1445"/>
<dbReference type="eggNOG" id="COG0813">
    <property type="taxonomic scope" value="Bacteria"/>
</dbReference>
<dbReference type="HOGENOM" id="CLU_068457_2_0_9"/>
<dbReference type="GO" id="GO:0005829">
    <property type="term" value="C:cytosol"/>
    <property type="evidence" value="ECO:0007669"/>
    <property type="project" value="TreeGrafter"/>
</dbReference>
<dbReference type="GO" id="GO:0004731">
    <property type="term" value="F:purine-nucleoside phosphorylase activity"/>
    <property type="evidence" value="ECO:0007669"/>
    <property type="project" value="UniProtKB-UniRule"/>
</dbReference>
<dbReference type="GO" id="GO:0006152">
    <property type="term" value="P:purine nucleoside catabolic process"/>
    <property type="evidence" value="ECO:0007669"/>
    <property type="project" value="TreeGrafter"/>
</dbReference>
<dbReference type="CDD" id="cd09006">
    <property type="entry name" value="PNP_EcPNPI-like"/>
    <property type="match status" value="1"/>
</dbReference>
<dbReference type="Gene3D" id="3.40.50.1580">
    <property type="entry name" value="Nucleoside phosphorylase domain"/>
    <property type="match status" value="1"/>
</dbReference>
<dbReference type="HAMAP" id="MF_01627">
    <property type="entry name" value="Pur_nucleosid_phosp"/>
    <property type="match status" value="1"/>
</dbReference>
<dbReference type="InterPro" id="IPR004402">
    <property type="entry name" value="DeoD-type"/>
</dbReference>
<dbReference type="InterPro" id="IPR018016">
    <property type="entry name" value="Nucleoside_phosphorylase_CS"/>
</dbReference>
<dbReference type="InterPro" id="IPR000845">
    <property type="entry name" value="Nucleoside_phosphorylase_d"/>
</dbReference>
<dbReference type="InterPro" id="IPR035994">
    <property type="entry name" value="Nucleoside_phosphorylase_sf"/>
</dbReference>
<dbReference type="NCBIfam" id="TIGR00107">
    <property type="entry name" value="deoD"/>
    <property type="match status" value="1"/>
</dbReference>
<dbReference type="NCBIfam" id="NF004489">
    <property type="entry name" value="PRK05819.1"/>
    <property type="match status" value="1"/>
</dbReference>
<dbReference type="PANTHER" id="PTHR43691:SF11">
    <property type="entry name" value="FI09636P-RELATED"/>
    <property type="match status" value="1"/>
</dbReference>
<dbReference type="PANTHER" id="PTHR43691">
    <property type="entry name" value="URIDINE PHOSPHORYLASE"/>
    <property type="match status" value="1"/>
</dbReference>
<dbReference type="Pfam" id="PF01048">
    <property type="entry name" value="PNP_UDP_1"/>
    <property type="match status" value="1"/>
</dbReference>
<dbReference type="SUPFAM" id="SSF53167">
    <property type="entry name" value="Purine and uridine phosphorylases"/>
    <property type="match status" value="1"/>
</dbReference>
<dbReference type="PROSITE" id="PS01232">
    <property type="entry name" value="PNP_UDP_1"/>
    <property type="match status" value="1"/>
</dbReference>
<name>DEOD_STRSY</name>